<comment type="function">
    <text evidence="1">Required for the formation of a threonylcarbamoyl group on adenosine at position 37 (t(6)A37) in tRNAs that read codons beginning with adenine. Is involved in the transfer of the threonylcarbamoyl moiety of threonylcarbamoyl-AMP (TC-AMP) to the N6 group of A37, together with TsaE and TsaB. TsaD likely plays a direct catalytic role in this reaction.</text>
</comment>
<comment type="catalytic activity">
    <reaction evidence="1">
        <text>L-threonylcarbamoyladenylate + adenosine(37) in tRNA = N(6)-L-threonylcarbamoyladenosine(37) in tRNA + AMP + H(+)</text>
        <dbReference type="Rhea" id="RHEA:37059"/>
        <dbReference type="Rhea" id="RHEA-COMP:10162"/>
        <dbReference type="Rhea" id="RHEA-COMP:10163"/>
        <dbReference type="ChEBI" id="CHEBI:15378"/>
        <dbReference type="ChEBI" id="CHEBI:73682"/>
        <dbReference type="ChEBI" id="CHEBI:74411"/>
        <dbReference type="ChEBI" id="CHEBI:74418"/>
        <dbReference type="ChEBI" id="CHEBI:456215"/>
        <dbReference type="EC" id="2.3.1.234"/>
    </reaction>
</comment>
<comment type="cofactor">
    <cofactor evidence="1">
        <name>Fe(2+)</name>
        <dbReference type="ChEBI" id="CHEBI:29033"/>
    </cofactor>
    <text evidence="1">Binds 1 Fe(2+) ion per subunit.</text>
</comment>
<comment type="subcellular location">
    <subcellularLocation>
        <location evidence="1">Cytoplasm</location>
    </subcellularLocation>
</comment>
<comment type="similarity">
    <text evidence="1">Belongs to the KAE1 / TsaD family.</text>
</comment>
<proteinExistence type="inferred from homology"/>
<reference key="1">
    <citation type="journal article" date="2005" name="J. Bacteriol.">
        <title>Insights on evolution of virulence and resistance from the complete genome analysis of an early methicillin-resistant Staphylococcus aureus strain and a biofilm-producing methicillin-resistant Staphylococcus epidermidis strain.</title>
        <authorList>
            <person name="Gill S.R."/>
            <person name="Fouts D.E."/>
            <person name="Archer G.L."/>
            <person name="Mongodin E.F."/>
            <person name="DeBoy R.T."/>
            <person name="Ravel J."/>
            <person name="Paulsen I.T."/>
            <person name="Kolonay J.F."/>
            <person name="Brinkac L.M."/>
            <person name="Beanan M.J."/>
            <person name="Dodson R.J."/>
            <person name="Daugherty S.C."/>
            <person name="Madupu R."/>
            <person name="Angiuoli S.V."/>
            <person name="Durkin A.S."/>
            <person name="Haft D.H."/>
            <person name="Vamathevan J.J."/>
            <person name="Khouri H."/>
            <person name="Utterback T.R."/>
            <person name="Lee C."/>
            <person name="Dimitrov G."/>
            <person name="Jiang L."/>
            <person name="Qin H."/>
            <person name="Weidman J."/>
            <person name="Tran K."/>
            <person name="Kang K.H."/>
            <person name="Hance I.R."/>
            <person name="Nelson K.E."/>
            <person name="Fraser C.M."/>
        </authorList>
    </citation>
    <scope>NUCLEOTIDE SEQUENCE [LARGE SCALE GENOMIC DNA]</scope>
    <source>
        <strain>COL</strain>
    </source>
</reference>
<sequence length="341" mass="36819">MTKDILILAVETSCDETSVSVIKNGRDILSNTVLSQIESHKRFGGVVPEVASRHHVEGITATINEALGDADVSIEDIDAIAVTEGPGLIGALLIGVNAAKALAFAYDKPLIPVHHIAGHIYANHIEEPLTFPLIALIVSGGHTELVYMKDHLSFEVIGETRDDAVGEAYDKVARTIGLNYPGGPQVDRLAAEGEDTYSFPRVWLDKDSYDFSFSGLKSAVINQLHNQRQKNIPIIEANVATSFQNSVVEVLTFKAIQACKEYGVQRLIVAGGVASNKGLRQSLADQCKVNDIQLTIPSPKLCTDNAAMIGVAGHYLYQQGRFADLALNGHSNIDLEEYSAE</sequence>
<keyword id="KW-0012">Acyltransferase</keyword>
<keyword id="KW-0963">Cytoplasm</keyword>
<keyword id="KW-0408">Iron</keyword>
<keyword id="KW-0479">Metal-binding</keyword>
<keyword id="KW-0808">Transferase</keyword>
<keyword id="KW-0819">tRNA processing</keyword>
<feature type="chain" id="PRO_0000303545" description="tRNA N6-adenosine threonylcarbamoyltransferase">
    <location>
        <begin position="1"/>
        <end position="341"/>
    </location>
</feature>
<feature type="binding site" evidence="1">
    <location>
        <position position="115"/>
    </location>
    <ligand>
        <name>Fe cation</name>
        <dbReference type="ChEBI" id="CHEBI:24875"/>
    </ligand>
</feature>
<feature type="binding site" evidence="1">
    <location>
        <position position="119"/>
    </location>
    <ligand>
        <name>Fe cation</name>
        <dbReference type="ChEBI" id="CHEBI:24875"/>
    </ligand>
</feature>
<feature type="binding site" evidence="1">
    <location>
        <begin position="137"/>
        <end position="141"/>
    </location>
    <ligand>
        <name>substrate</name>
    </ligand>
</feature>
<feature type="binding site" evidence="1">
    <location>
        <position position="170"/>
    </location>
    <ligand>
        <name>substrate</name>
    </ligand>
</feature>
<feature type="binding site" evidence="1">
    <location>
        <position position="183"/>
    </location>
    <ligand>
        <name>substrate</name>
    </ligand>
</feature>
<feature type="binding site" evidence="1">
    <location>
        <position position="187"/>
    </location>
    <ligand>
        <name>substrate</name>
    </ligand>
</feature>
<feature type="binding site" evidence="1">
    <location>
        <position position="276"/>
    </location>
    <ligand>
        <name>substrate</name>
    </ligand>
</feature>
<feature type="binding site" evidence="1">
    <location>
        <position position="304"/>
    </location>
    <ligand>
        <name>Fe cation</name>
        <dbReference type="ChEBI" id="CHEBI:24875"/>
    </ligand>
</feature>
<evidence type="ECO:0000255" key="1">
    <source>
        <dbReference type="HAMAP-Rule" id="MF_01445"/>
    </source>
</evidence>
<dbReference type="EC" id="2.3.1.234" evidence="1"/>
<dbReference type="EMBL" id="CP000046">
    <property type="protein sequence ID" value="AAW37001.1"/>
    <property type="molecule type" value="Genomic_DNA"/>
</dbReference>
<dbReference type="RefSeq" id="WP_000159034.1">
    <property type="nucleotide sequence ID" value="NZ_JBGOFO010000006.1"/>
</dbReference>
<dbReference type="SMR" id="Q5HEF2"/>
<dbReference type="KEGG" id="sac:SACOL2038"/>
<dbReference type="HOGENOM" id="CLU_023208_0_2_9"/>
<dbReference type="Proteomes" id="UP000000530">
    <property type="component" value="Chromosome"/>
</dbReference>
<dbReference type="GO" id="GO:0005737">
    <property type="term" value="C:cytoplasm"/>
    <property type="evidence" value="ECO:0007669"/>
    <property type="project" value="UniProtKB-SubCell"/>
</dbReference>
<dbReference type="GO" id="GO:0005506">
    <property type="term" value="F:iron ion binding"/>
    <property type="evidence" value="ECO:0007669"/>
    <property type="project" value="UniProtKB-UniRule"/>
</dbReference>
<dbReference type="GO" id="GO:0061711">
    <property type="term" value="F:N(6)-L-threonylcarbamoyladenine synthase activity"/>
    <property type="evidence" value="ECO:0007669"/>
    <property type="project" value="UniProtKB-EC"/>
</dbReference>
<dbReference type="GO" id="GO:0002949">
    <property type="term" value="P:tRNA threonylcarbamoyladenosine modification"/>
    <property type="evidence" value="ECO:0007669"/>
    <property type="project" value="UniProtKB-UniRule"/>
</dbReference>
<dbReference type="CDD" id="cd24133">
    <property type="entry name" value="ASKHA_NBD_TsaD_bac"/>
    <property type="match status" value="1"/>
</dbReference>
<dbReference type="FunFam" id="3.30.420.40:FF:000012">
    <property type="entry name" value="tRNA N6-adenosine threonylcarbamoyltransferase"/>
    <property type="match status" value="1"/>
</dbReference>
<dbReference type="FunFam" id="3.30.420.40:FF:000040">
    <property type="entry name" value="tRNA N6-adenosine threonylcarbamoyltransferase"/>
    <property type="match status" value="1"/>
</dbReference>
<dbReference type="Gene3D" id="3.30.420.40">
    <property type="match status" value="2"/>
</dbReference>
<dbReference type="HAMAP" id="MF_01445">
    <property type="entry name" value="TsaD"/>
    <property type="match status" value="1"/>
</dbReference>
<dbReference type="InterPro" id="IPR043129">
    <property type="entry name" value="ATPase_NBD"/>
</dbReference>
<dbReference type="InterPro" id="IPR000905">
    <property type="entry name" value="Gcp-like_dom"/>
</dbReference>
<dbReference type="InterPro" id="IPR017861">
    <property type="entry name" value="KAE1/TsaD"/>
</dbReference>
<dbReference type="InterPro" id="IPR017860">
    <property type="entry name" value="Peptidase_M22_CS"/>
</dbReference>
<dbReference type="InterPro" id="IPR022450">
    <property type="entry name" value="TsaD"/>
</dbReference>
<dbReference type="NCBIfam" id="TIGR00329">
    <property type="entry name" value="gcp_kae1"/>
    <property type="match status" value="1"/>
</dbReference>
<dbReference type="NCBIfam" id="TIGR03723">
    <property type="entry name" value="T6A_TsaD_YgjD"/>
    <property type="match status" value="1"/>
</dbReference>
<dbReference type="PANTHER" id="PTHR11735">
    <property type="entry name" value="TRNA N6-ADENOSINE THREONYLCARBAMOYLTRANSFERASE"/>
    <property type="match status" value="1"/>
</dbReference>
<dbReference type="PANTHER" id="PTHR11735:SF6">
    <property type="entry name" value="TRNA N6-ADENOSINE THREONYLCARBAMOYLTRANSFERASE, MITOCHONDRIAL"/>
    <property type="match status" value="1"/>
</dbReference>
<dbReference type="Pfam" id="PF00814">
    <property type="entry name" value="TsaD"/>
    <property type="match status" value="1"/>
</dbReference>
<dbReference type="PRINTS" id="PR00789">
    <property type="entry name" value="OSIALOPTASE"/>
</dbReference>
<dbReference type="SUPFAM" id="SSF53067">
    <property type="entry name" value="Actin-like ATPase domain"/>
    <property type="match status" value="2"/>
</dbReference>
<dbReference type="PROSITE" id="PS01016">
    <property type="entry name" value="GLYCOPROTEASE"/>
    <property type="match status" value="1"/>
</dbReference>
<name>TSAD_STAAC</name>
<accession>Q5HEF2</accession>
<gene>
    <name evidence="1" type="primary">tsaD</name>
    <name type="synonym">gcp</name>
    <name type="ordered locus">SACOL2038</name>
</gene>
<protein>
    <recommendedName>
        <fullName evidence="1">tRNA N6-adenosine threonylcarbamoyltransferase</fullName>
        <ecNumber evidence="1">2.3.1.234</ecNumber>
    </recommendedName>
    <alternativeName>
        <fullName evidence="1">N6-L-threonylcarbamoyladenine synthase</fullName>
        <shortName evidence="1">t(6)A synthase</shortName>
    </alternativeName>
    <alternativeName>
        <fullName evidence="1">t(6)A37 threonylcarbamoyladenosine biosynthesis protein TsaD</fullName>
    </alternativeName>
    <alternativeName>
        <fullName evidence="1">tRNA threonylcarbamoyladenosine biosynthesis protein TsaD</fullName>
    </alternativeName>
</protein>
<organism>
    <name type="scientific">Staphylococcus aureus (strain COL)</name>
    <dbReference type="NCBI Taxonomy" id="93062"/>
    <lineage>
        <taxon>Bacteria</taxon>
        <taxon>Bacillati</taxon>
        <taxon>Bacillota</taxon>
        <taxon>Bacilli</taxon>
        <taxon>Bacillales</taxon>
        <taxon>Staphylococcaceae</taxon>
        <taxon>Staphylococcus</taxon>
    </lineage>
</organism>